<protein>
    <recommendedName>
        <fullName evidence="1">Probable transcriptional regulatory protein BMASAVP1_A1075</fullName>
    </recommendedName>
</protein>
<comment type="subcellular location">
    <subcellularLocation>
        <location evidence="1">Cytoplasm</location>
    </subcellularLocation>
</comment>
<comment type="similarity">
    <text evidence="1">Belongs to the TACO1 family.</text>
</comment>
<organism>
    <name type="scientific">Burkholderia mallei (strain SAVP1)</name>
    <dbReference type="NCBI Taxonomy" id="320388"/>
    <lineage>
        <taxon>Bacteria</taxon>
        <taxon>Pseudomonadati</taxon>
        <taxon>Pseudomonadota</taxon>
        <taxon>Betaproteobacteria</taxon>
        <taxon>Burkholderiales</taxon>
        <taxon>Burkholderiaceae</taxon>
        <taxon>Burkholderia</taxon>
        <taxon>pseudomallei group</taxon>
    </lineage>
</organism>
<accession>A1V2G2</accession>
<gene>
    <name type="ordered locus">BMASAVP1_A1075</name>
</gene>
<name>Y2875_BURMS</name>
<dbReference type="EMBL" id="CP000526">
    <property type="protein sequence ID" value="ABM50597.1"/>
    <property type="molecule type" value="Genomic_DNA"/>
</dbReference>
<dbReference type="RefSeq" id="WP_004185607.1">
    <property type="nucleotide sequence ID" value="NC_008785.1"/>
</dbReference>
<dbReference type="SMR" id="A1V2G2"/>
<dbReference type="KEGG" id="bmv:BMASAVP1_A1075"/>
<dbReference type="HOGENOM" id="CLU_062974_2_2_4"/>
<dbReference type="GO" id="GO:0005829">
    <property type="term" value="C:cytosol"/>
    <property type="evidence" value="ECO:0007669"/>
    <property type="project" value="TreeGrafter"/>
</dbReference>
<dbReference type="GO" id="GO:0003677">
    <property type="term" value="F:DNA binding"/>
    <property type="evidence" value="ECO:0007669"/>
    <property type="project" value="UniProtKB-UniRule"/>
</dbReference>
<dbReference type="GO" id="GO:0006355">
    <property type="term" value="P:regulation of DNA-templated transcription"/>
    <property type="evidence" value="ECO:0007669"/>
    <property type="project" value="UniProtKB-UniRule"/>
</dbReference>
<dbReference type="FunFam" id="1.10.10.200:FF:000001">
    <property type="entry name" value="Probable transcriptional regulatory protein YebC"/>
    <property type="match status" value="1"/>
</dbReference>
<dbReference type="FunFam" id="3.30.70.980:FF:000002">
    <property type="entry name" value="Probable transcriptional regulatory protein YebC"/>
    <property type="match status" value="1"/>
</dbReference>
<dbReference type="Gene3D" id="1.10.10.200">
    <property type="match status" value="1"/>
</dbReference>
<dbReference type="Gene3D" id="3.30.70.980">
    <property type="match status" value="2"/>
</dbReference>
<dbReference type="HAMAP" id="MF_00693">
    <property type="entry name" value="Transcrip_reg_TACO1"/>
    <property type="match status" value="1"/>
</dbReference>
<dbReference type="InterPro" id="IPR017856">
    <property type="entry name" value="Integrase-like_N"/>
</dbReference>
<dbReference type="InterPro" id="IPR048300">
    <property type="entry name" value="TACO1_YebC-like_2nd/3rd_dom"/>
</dbReference>
<dbReference type="InterPro" id="IPR049083">
    <property type="entry name" value="TACO1_YebC_N"/>
</dbReference>
<dbReference type="InterPro" id="IPR002876">
    <property type="entry name" value="Transcrip_reg_TACO1-like"/>
</dbReference>
<dbReference type="InterPro" id="IPR026564">
    <property type="entry name" value="Transcrip_reg_TACO1-like_dom3"/>
</dbReference>
<dbReference type="InterPro" id="IPR029072">
    <property type="entry name" value="YebC-like"/>
</dbReference>
<dbReference type="NCBIfam" id="NF001030">
    <property type="entry name" value="PRK00110.1"/>
    <property type="match status" value="1"/>
</dbReference>
<dbReference type="NCBIfam" id="NF009044">
    <property type="entry name" value="PRK12378.1"/>
    <property type="match status" value="1"/>
</dbReference>
<dbReference type="NCBIfam" id="TIGR01033">
    <property type="entry name" value="YebC/PmpR family DNA-binding transcriptional regulator"/>
    <property type="match status" value="1"/>
</dbReference>
<dbReference type="PANTHER" id="PTHR12532:SF6">
    <property type="entry name" value="TRANSCRIPTIONAL REGULATORY PROTEIN YEBC-RELATED"/>
    <property type="match status" value="1"/>
</dbReference>
<dbReference type="PANTHER" id="PTHR12532">
    <property type="entry name" value="TRANSLATIONAL ACTIVATOR OF CYTOCHROME C OXIDASE 1"/>
    <property type="match status" value="1"/>
</dbReference>
<dbReference type="Pfam" id="PF20772">
    <property type="entry name" value="TACO1_YebC_N"/>
    <property type="match status" value="1"/>
</dbReference>
<dbReference type="Pfam" id="PF01709">
    <property type="entry name" value="Transcrip_reg"/>
    <property type="match status" value="1"/>
</dbReference>
<dbReference type="SUPFAM" id="SSF75625">
    <property type="entry name" value="YebC-like"/>
    <property type="match status" value="1"/>
</dbReference>
<proteinExistence type="inferred from homology"/>
<evidence type="ECO:0000255" key="1">
    <source>
        <dbReference type="HAMAP-Rule" id="MF_00693"/>
    </source>
</evidence>
<feature type="chain" id="PRO_1000045284" description="Probable transcriptional regulatory protein BMASAVP1_A1075">
    <location>
        <begin position="1"/>
        <end position="242"/>
    </location>
</feature>
<keyword id="KW-0963">Cytoplasm</keyword>
<keyword id="KW-0238">DNA-binding</keyword>
<keyword id="KW-0804">Transcription</keyword>
<keyword id="KW-0805">Transcription regulation</keyword>
<reference key="1">
    <citation type="journal article" date="2010" name="Genome Biol. Evol.">
        <title>Continuing evolution of Burkholderia mallei through genome reduction and large-scale rearrangements.</title>
        <authorList>
            <person name="Losada L."/>
            <person name="Ronning C.M."/>
            <person name="DeShazer D."/>
            <person name="Woods D."/>
            <person name="Fedorova N."/>
            <person name="Kim H.S."/>
            <person name="Shabalina S.A."/>
            <person name="Pearson T.R."/>
            <person name="Brinkac L."/>
            <person name="Tan P."/>
            <person name="Nandi T."/>
            <person name="Crabtree J."/>
            <person name="Badger J."/>
            <person name="Beckstrom-Sternberg S."/>
            <person name="Saqib M."/>
            <person name="Schutzer S.E."/>
            <person name="Keim P."/>
            <person name="Nierman W.C."/>
        </authorList>
    </citation>
    <scope>NUCLEOTIDE SEQUENCE [LARGE SCALE GENOMIC DNA]</scope>
    <source>
        <strain>SAVP1</strain>
    </source>
</reference>
<sequence length="242" mass="26122">MAGHSKWANIKHKKAAADAKRGKIWTRLIKEIQVAARLGGGDVNSNPRLRLAVDKAADANMPKDNVKRAIDRGVGGADGANYEEIRYEGYGIGGAAIIVDTLTDNRTRTVAEVRHAFSKFGGNMGTDGSVAFMFDHVGQFLFAPGTSEDALMEAALEAGANDVNTNDDGSIEVLCDWQEFSKVKDALEAAGFKAELAEVTMKPQNEVDFTGEDAVKMQKLLDALENLDDVQEVYTNAVVVEE</sequence>